<comment type="function">
    <text evidence="1">Functions in nuclear protein import as an adapter protein for nuclear receptor KPNB1. Binds specifically and directly to substrates containing either a simple or bipartite NLS motif. Docking of the importin/substrate complex to the nuclear pore complex (NPC) is mediated by KPNB1 through binding to nucleoporin FxFG repeats and the complex is subsequently translocated through the pore by an energy requiring, Ran-dependent mechanism. At the nucleoplasmic side of the NPC, Ran binds to importin-beta and the three components separate and importin-alpha and -beta are re-exported from the nucleus to the cytoplasm where GTP hydrolysis releases Ran from importin. The directionality of nuclear import is thought to be conferred by an asymmetric distribution of the GTP- and GDP-bound forms of Ran between the cytoplasm and nucleus (By similarity).</text>
</comment>
<comment type="subunit">
    <text evidence="1">Forms a complex with importin subunit beta-1. Interacts with ZIC3 (By similarity).</text>
</comment>
<comment type="tissue specificity">
    <text evidence="5">Widely expressed.</text>
</comment>
<comment type="similarity">
    <text evidence="6">Belongs to the importin alpha family.</text>
</comment>
<evidence type="ECO:0000250" key="1"/>
<evidence type="ECO:0000250" key="2">
    <source>
        <dbReference type="UniProtKB" id="O60684"/>
    </source>
</evidence>
<evidence type="ECO:0000255" key="3">
    <source>
        <dbReference type="PROSITE-ProRule" id="PRU00561"/>
    </source>
</evidence>
<evidence type="ECO:0000256" key="4">
    <source>
        <dbReference type="SAM" id="MobiDB-lite"/>
    </source>
</evidence>
<evidence type="ECO:0000269" key="5">
    <source>
    </source>
</evidence>
<evidence type="ECO:0000305" key="6"/>
<sequence>METMASPGKDNYRMKSYKNNALNPEEMRRRREEEGIQLRKQKREQQLFKRRNVELINEEAAMFDSLLMDSYVSSTTGESVITREMVEMLFSDDPDLQLATTQKFRKLLSKEPSPPIDEVINTPGVVDRFVEFLKRNENCTLQFEAAWALTNIASGTSQQTKIVIEAGAVPIFIELLNSDFEDVQEQAVWALGNIAGDSSVCRDYVLNCSILNPLLTLLTKSTRLTMTRNAVWALSNLCRGKNPPPEFAKVSPCLPVLSRLLFSSDSDLLADACWALSYLSDGPNEKIQAVIDSGVCRRLVELLMHNDNKVASPALRAVGNIVTGDDIQTQVILNCSALPCLLHLLSSSKESIRKEACWTISNITAGNRAQIQAVIDANIFPVLIEILQKAEFRTRKEAAWAITNATSGGTPEQIRYLVSLGCIKPLCDLLTVMDSKIVQVALNGLENILRLGEQEGKRSGSGVNPYCGLIEEAYGLDKIEFLQSHENQEIYQKAFDLIEHYFGVEDDDSSLAPQVDETQQQFIFQQPEAPMEGFQL</sequence>
<protein>
    <recommendedName>
        <fullName>Importin subunit alpha-7</fullName>
    </recommendedName>
    <alternativeName>
        <fullName>Karyopherin subunit alpha-6</fullName>
    </alternativeName>
</protein>
<gene>
    <name type="primary">KPNA6</name>
    <name type="synonym">IPOA7</name>
</gene>
<dbReference type="EMBL" id="BT026550">
    <property type="protein sequence ID" value="ABH06337.1"/>
    <property type="molecule type" value="mRNA"/>
</dbReference>
<dbReference type="RefSeq" id="NP_001069422.1">
    <property type="nucleotide sequence ID" value="NM_001075954.1"/>
</dbReference>
<dbReference type="SMR" id="Q0V7M0"/>
<dbReference type="FunCoup" id="Q0V7M0">
    <property type="interactions" value="3304"/>
</dbReference>
<dbReference type="STRING" id="9913.ENSBTAP00000003764"/>
<dbReference type="PaxDb" id="9913-ENSBTAP00000003764"/>
<dbReference type="Ensembl" id="ENSBTAT00000003764.7">
    <property type="protein sequence ID" value="ENSBTAP00000003764.7"/>
    <property type="gene ID" value="ENSBTAG00000002896.7"/>
</dbReference>
<dbReference type="GeneID" id="531602"/>
<dbReference type="KEGG" id="bta:531602"/>
<dbReference type="CTD" id="23633"/>
<dbReference type="VGNC" id="VGNC:30705">
    <property type="gene designation" value="KPNA6"/>
</dbReference>
<dbReference type="eggNOG" id="KOG0166">
    <property type="taxonomic scope" value="Eukaryota"/>
</dbReference>
<dbReference type="GeneTree" id="ENSGT01050000244950"/>
<dbReference type="HOGENOM" id="CLU_018084_6_0_1"/>
<dbReference type="InParanoid" id="Q0V7M0"/>
<dbReference type="OrthoDB" id="29145at2759"/>
<dbReference type="Proteomes" id="UP000009136">
    <property type="component" value="Chromosome 1"/>
</dbReference>
<dbReference type="GO" id="GO:0005737">
    <property type="term" value="C:cytoplasm"/>
    <property type="evidence" value="ECO:0007669"/>
    <property type="project" value="InterPro"/>
</dbReference>
<dbReference type="GO" id="GO:0043657">
    <property type="term" value="C:host cell"/>
    <property type="evidence" value="ECO:0007669"/>
    <property type="project" value="GOC"/>
</dbReference>
<dbReference type="GO" id="GO:0042564">
    <property type="term" value="C:NLS-dependent protein nuclear import complex"/>
    <property type="evidence" value="ECO:0007669"/>
    <property type="project" value="Ensembl"/>
</dbReference>
<dbReference type="GO" id="GO:0005654">
    <property type="term" value="C:nucleoplasm"/>
    <property type="evidence" value="ECO:0000318"/>
    <property type="project" value="GO_Central"/>
</dbReference>
<dbReference type="GO" id="GO:0005634">
    <property type="term" value="C:nucleus"/>
    <property type="evidence" value="ECO:0000318"/>
    <property type="project" value="GO_Central"/>
</dbReference>
<dbReference type="GO" id="GO:0061608">
    <property type="term" value="F:nuclear import signal receptor activity"/>
    <property type="evidence" value="ECO:0000318"/>
    <property type="project" value="GO_Central"/>
</dbReference>
<dbReference type="GO" id="GO:0008139">
    <property type="term" value="F:nuclear localization sequence binding"/>
    <property type="evidence" value="ECO:0000318"/>
    <property type="project" value="GO_Central"/>
</dbReference>
<dbReference type="GO" id="GO:0075506">
    <property type="term" value="P:entry of viral genome into host nucleus through nuclear pore complex via importin"/>
    <property type="evidence" value="ECO:0007669"/>
    <property type="project" value="Ensembl"/>
</dbReference>
<dbReference type="GO" id="GO:0006607">
    <property type="term" value="P:NLS-bearing protein import into nucleus"/>
    <property type="evidence" value="ECO:0000318"/>
    <property type="project" value="GO_Central"/>
</dbReference>
<dbReference type="GO" id="GO:1903902">
    <property type="term" value="P:positive regulation of viral life cycle"/>
    <property type="evidence" value="ECO:0007669"/>
    <property type="project" value="Ensembl"/>
</dbReference>
<dbReference type="FunFam" id="1.20.5.690:FF:000001">
    <property type="entry name" value="Importin subunit alpha"/>
    <property type="match status" value="1"/>
</dbReference>
<dbReference type="FunFam" id="1.25.10.10:FF:000013">
    <property type="entry name" value="Importin subunit alpha"/>
    <property type="match status" value="1"/>
</dbReference>
<dbReference type="Gene3D" id="1.20.5.690">
    <property type="entry name" value="Importin-alpha, importin-beta-binding domain"/>
    <property type="match status" value="1"/>
</dbReference>
<dbReference type="Gene3D" id="1.25.10.10">
    <property type="entry name" value="Leucine-rich Repeat Variant"/>
    <property type="match status" value="1"/>
</dbReference>
<dbReference type="InterPro" id="IPR011989">
    <property type="entry name" value="ARM-like"/>
</dbReference>
<dbReference type="InterPro" id="IPR016024">
    <property type="entry name" value="ARM-type_fold"/>
</dbReference>
<dbReference type="InterPro" id="IPR032413">
    <property type="entry name" value="Arm_3"/>
</dbReference>
<dbReference type="InterPro" id="IPR000225">
    <property type="entry name" value="Armadillo"/>
</dbReference>
<dbReference type="InterPro" id="IPR002652">
    <property type="entry name" value="Importin-a_IBB"/>
</dbReference>
<dbReference type="InterPro" id="IPR036975">
    <property type="entry name" value="Importin-a_IBB_sf"/>
</dbReference>
<dbReference type="InterPro" id="IPR024931">
    <property type="entry name" value="Importin_alpha"/>
</dbReference>
<dbReference type="PANTHER" id="PTHR23316">
    <property type="entry name" value="IMPORTIN ALPHA"/>
    <property type="match status" value="1"/>
</dbReference>
<dbReference type="Pfam" id="PF00514">
    <property type="entry name" value="Arm"/>
    <property type="match status" value="8"/>
</dbReference>
<dbReference type="Pfam" id="PF16186">
    <property type="entry name" value="Arm_3"/>
    <property type="match status" value="1"/>
</dbReference>
<dbReference type="Pfam" id="PF01749">
    <property type="entry name" value="IBB"/>
    <property type="match status" value="1"/>
</dbReference>
<dbReference type="PIRSF" id="PIRSF005673">
    <property type="entry name" value="Importin_alpha"/>
    <property type="match status" value="1"/>
</dbReference>
<dbReference type="SMART" id="SM00185">
    <property type="entry name" value="ARM"/>
    <property type="match status" value="8"/>
</dbReference>
<dbReference type="SUPFAM" id="SSF48371">
    <property type="entry name" value="ARM repeat"/>
    <property type="match status" value="1"/>
</dbReference>
<dbReference type="PROSITE" id="PS50176">
    <property type="entry name" value="ARM_REPEAT"/>
    <property type="match status" value="2"/>
</dbReference>
<dbReference type="PROSITE" id="PS51214">
    <property type="entry name" value="IBB"/>
    <property type="match status" value="1"/>
</dbReference>
<accession>Q0V7M0</accession>
<keyword id="KW-0007">Acetylation</keyword>
<keyword id="KW-0597">Phosphoprotein</keyword>
<keyword id="KW-0653">Protein transport</keyword>
<keyword id="KW-1185">Reference proteome</keyword>
<keyword id="KW-0677">Repeat</keyword>
<keyword id="KW-0813">Transport</keyword>
<organism>
    <name type="scientific">Bos taurus</name>
    <name type="common">Bovine</name>
    <dbReference type="NCBI Taxonomy" id="9913"/>
    <lineage>
        <taxon>Eukaryota</taxon>
        <taxon>Metazoa</taxon>
        <taxon>Chordata</taxon>
        <taxon>Craniata</taxon>
        <taxon>Vertebrata</taxon>
        <taxon>Euteleostomi</taxon>
        <taxon>Mammalia</taxon>
        <taxon>Eutheria</taxon>
        <taxon>Laurasiatheria</taxon>
        <taxon>Artiodactyla</taxon>
        <taxon>Ruminantia</taxon>
        <taxon>Pecora</taxon>
        <taxon>Bovidae</taxon>
        <taxon>Bovinae</taxon>
        <taxon>Bos</taxon>
    </lineage>
</organism>
<name>IMA7_BOVIN</name>
<feature type="chain" id="PRO_0000270148" description="Importin subunit alpha-7">
    <location>
        <begin position="1"/>
        <end position="536"/>
    </location>
</feature>
<feature type="domain" description="IBB" evidence="3">
    <location>
        <begin position="1"/>
        <end position="60"/>
    </location>
</feature>
<feature type="repeat" description="ARM 1; truncated">
    <location>
        <begin position="76"/>
        <end position="115"/>
    </location>
</feature>
<feature type="repeat" description="ARM 2">
    <location>
        <begin position="116"/>
        <end position="159"/>
    </location>
</feature>
<feature type="repeat" description="ARM 3">
    <location>
        <begin position="160"/>
        <end position="204"/>
    </location>
</feature>
<feature type="repeat" description="ARM 4">
    <location>
        <begin position="205"/>
        <end position="243"/>
    </location>
</feature>
<feature type="repeat" description="ARM 5">
    <location>
        <begin position="244"/>
        <end position="288"/>
    </location>
</feature>
<feature type="repeat" description="ARM 6">
    <location>
        <begin position="289"/>
        <end position="328"/>
    </location>
</feature>
<feature type="repeat" description="ARM 7">
    <location>
        <begin position="329"/>
        <end position="370"/>
    </location>
</feature>
<feature type="repeat" description="ARM 8">
    <location>
        <begin position="371"/>
        <end position="410"/>
    </location>
</feature>
<feature type="repeat" description="ARM 9">
    <location>
        <begin position="411"/>
        <end position="453"/>
    </location>
</feature>
<feature type="repeat" description="ARM 10; atypical">
    <location>
        <begin position="457"/>
        <end position="502"/>
    </location>
</feature>
<feature type="region of interest" description="Disordered" evidence="4">
    <location>
        <begin position="1"/>
        <end position="29"/>
    </location>
</feature>
<feature type="region of interest" description="NLS binding site (major)" evidence="1">
    <location>
        <begin position="147"/>
        <end position="239"/>
    </location>
</feature>
<feature type="region of interest" description="NLS binding site (minor)" evidence="1">
    <location>
        <begin position="316"/>
        <end position="404"/>
    </location>
</feature>
<feature type="short sequence motif" description="Nuclear localization signal" evidence="1">
    <location>
        <begin position="45"/>
        <end position="54"/>
    </location>
</feature>
<feature type="modified residue" description="N-acetylmethionine" evidence="2">
    <location>
        <position position="1"/>
    </location>
</feature>
<feature type="modified residue" description="Phosphoserine" evidence="2">
    <location>
        <position position="6"/>
    </location>
</feature>
<feature type="modified residue" description="Phosphoserine" evidence="2">
    <location>
        <position position="113"/>
    </location>
</feature>
<proteinExistence type="evidence at transcript level"/>
<reference key="1">
    <citation type="journal article" date="2005" name="BMC Genomics">
        <title>Characterization of 954 bovine full-CDS cDNA sequences.</title>
        <authorList>
            <person name="Harhay G.P."/>
            <person name="Sonstegard T.S."/>
            <person name="Keele J.W."/>
            <person name="Heaton M.P."/>
            <person name="Clawson M.L."/>
            <person name="Snelling W.M."/>
            <person name="Wiedmann R.T."/>
            <person name="Van Tassell C.P."/>
            <person name="Smith T.P.L."/>
        </authorList>
    </citation>
    <scope>NUCLEOTIDE SEQUENCE [LARGE SCALE MRNA]</scope>
</reference>
<reference key="2">
    <citation type="journal article" date="2009" name="Biol. Reprod.">
        <title>Role of importin alpha8, a new member of the importin alpha family of nuclear transport proteins, in early embryonic development in cattle.</title>
        <authorList>
            <person name="Tejomurtula J."/>
            <person name="Lee K.B."/>
            <person name="Tripurani S.K."/>
            <person name="Smith G.W."/>
            <person name="Yao J."/>
        </authorList>
    </citation>
    <scope>TISSUE SPECIFICITY</scope>
</reference>